<organism>
    <name type="scientific">Acinetobacter baumannii (strain AB307-0294)</name>
    <dbReference type="NCBI Taxonomy" id="557600"/>
    <lineage>
        <taxon>Bacteria</taxon>
        <taxon>Pseudomonadati</taxon>
        <taxon>Pseudomonadota</taxon>
        <taxon>Gammaproteobacteria</taxon>
        <taxon>Moraxellales</taxon>
        <taxon>Moraxellaceae</taxon>
        <taxon>Acinetobacter</taxon>
        <taxon>Acinetobacter calcoaceticus/baumannii complex</taxon>
    </lineage>
</organism>
<comment type="function">
    <text evidence="1">Phosphorylation of dTMP to form dTDP in both de novo and salvage pathways of dTTP synthesis.</text>
</comment>
<comment type="catalytic activity">
    <reaction evidence="1">
        <text>dTMP + ATP = dTDP + ADP</text>
        <dbReference type="Rhea" id="RHEA:13517"/>
        <dbReference type="ChEBI" id="CHEBI:30616"/>
        <dbReference type="ChEBI" id="CHEBI:58369"/>
        <dbReference type="ChEBI" id="CHEBI:63528"/>
        <dbReference type="ChEBI" id="CHEBI:456216"/>
        <dbReference type="EC" id="2.7.4.9"/>
    </reaction>
</comment>
<comment type="similarity">
    <text evidence="1">Belongs to the thymidylate kinase family.</text>
</comment>
<name>KTHY_ACIB3</name>
<evidence type="ECO:0000255" key="1">
    <source>
        <dbReference type="HAMAP-Rule" id="MF_00165"/>
    </source>
</evidence>
<feature type="chain" id="PRO_1000190754" description="Thymidylate kinase">
    <location>
        <begin position="1"/>
        <end position="199"/>
    </location>
</feature>
<feature type="binding site" evidence="1">
    <location>
        <begin position="7"/>
        <end position="14"/>
    </location>
    <ligand>
        <name>ATP</name>
        <dbReference type="ChEBI" id="CHEBI:30616"/>
    </ligand>
</feature>
<protein>
    <recommendedName>
        <fullName evidence="1">Thymidylate kinase</fullName>
        <ecNumber evidence="1">2.7.4.9</ecNumber>
    </recommendedName>
    <alternativeName>
        <fullName evidence="1">dTMP kinase</fullName>
    </alternativeName>
</protein>
<gene>
    <name evidence="1" type="primary">tmk</name>
    <name type="ordered locus">ABBFA_000917</name>
</gene>
<proteinExistence type="inferred from homology"/>
<reference key="1">
    <citation type="journal article" date="2008" name="J. Bacteriol.">
        <title>Comparative genome sequence analysis of multidrug-resistant Acinetobacter baumannii.</title>
        <authorList>
            <person name="Adams M.D."/>
            <person name="Goglin K."/>
            <person name="Molyneaux N."/>
            <person name="Hujer K.M."/>
            <person name="Lavender H."/>
            <person name="Jamison J.J."/>
            <person name="MacDonald I.J."/>
            <person name="Martin K.M."/>
            <person name="Russo T."/>
            <person name="Campagnari A.A."/>
            <person name="Hujer A.M."/>
            <person name="Bonomo R.A."/>
            <person name="Gill S.R."/>
        </authorList>
    </citation>
    <scope>NUCLEOTIDE SEQUENCE [LARGE SCALE GENOMIC DNA]</scope>
    <source>
        <strain>AB307-0294</strain>
    </source>
</reference>
<keyword id="KW-0067">ATP-binding</keyword>
<keyword id="KW-0418">Kinase</keyword>
<keyword id="KW-0545">Nucleotide biosynthesis</keyword>
<keyword id="KW-0547">Nucleotide-binding</keyword>
<keyword id="KW-0808">Transferase</keyword>
<dbReference type="EC" id="2.7.4.9" evidence="1"/>
<dbReference type="EMBL" id="CP001172">
    <property type="protein sequence ID" value="ACJ57415.1"/>
    <property type="molecule type" value="Genomic_DNA"/>
</dbReference>
<dbReference type="RefSeq" id="WP_000470769.1">
    <property type="nucleotide sequence ID" value="NZ_CP001172.1"/>
</dbReference>
<dbReference type="SMR" id="B7GYE0"/>
<dbReference type="HOGENOM" id="CLU_049131_0_2_6"/>
<dbReference type="Proteomes" id="UP000006924">
    <property type="component" value="Chromosome"/>
</dbReference>
<dbReference type="GO" id="GO:0005829">
    <property type="term" value="C:cytosol"/>
    <property type="evidence" value="ECO:0007669"/>
    <property type="project" value="TreeGrafter"/>
</dbReference>
<dbReference type="GO" id="GO:0005524">
    <property type="term" value="F:ATP binding"/>
    <property type="evidence" value="ECO:0007669"/>
    <property type="project" value="UniProtKB-UniRule"/>
</dbReference>
<dbReference type="GO" id="GO:0004798">
    <property type="term" value="F:dTMP kinase activity"/>
    <property type="evidence" value="ECO:0007669"/>
    <property type="project" value="UniProtKB-UniRule"/>
</dbReference>
<dbReference type="GO" id="GO:0006233">
    <property type="term" value="P:dTDP biosynthetic process"/>
    <property type="evidence" value="ECO:0007669"/>
    <property type="project" value="InterPro"/>
</dbReference>
<dbReference type="GO" id="GO:0006235">
    <property type="term" value="P:dTTP biosynthetic process"/>
    <property type="evidence" value="ECO:0007669"/>
    <property type="project" value="UniProtKB-UniRule"/>
</dbReference>
<dbReference type="GO" id="GO:0006227">
    <property type="term" value="P:dUDP biosynthetic process"/>
    <property type="evidence" value="ECO:0007669"/>
    <property type="project" value="TreeGrafter"/>
</dbReference>
<dbReference type="CDD" id="cd01672">
    <property type="entry name" value="TMPK"/>
    <property type="match status" value="1"/>
</dbReference>
<dbReference type="FunFam" id="3.40.50.300:FF:000225">
    <property type="entry name" value="Thymidylate kinase"/>
    <property type="match status" value="1"/>
</dbReference>
<dbReference type="Gene3D" id="3.40.50.300">
    <property type="entry name" value="P-loop containing nucleotide triphosphate hydrolases"/>
    <property type="match status" value="1"/>
</dbReference>
<dbReference type="HAMAP" id="MF_00165">
    <property type="entry name" value="Thymidylate_kinase"/>
    <property type="match status" value="1"/>
</dbReference>
<dbReference type="InterPro" id="IPR027417">
    <property type="entry name" value="P-loop_NTPase"/>
</dbReference>
<dbReference type="InterPro" id="IPR039430">
    <property type="entry name" value="Thymidylate_kin-like_dom"/>
</dbReference>
<dbReference type="InterPro" id="IPR018094">
    <property type="entry name" value="Thymidylate_kinase"/>
</dbReference>
<dbReference type="NCBIfam" id="TIGR00041">
    <property type="entry name" value="DTMP_kinase"/>
    <property type="match status" value="1"/>
</dbReference>
<dbReference type="PANTHER" id="PTHR10344">
    <property type="entry name" value="THYMIDYLATE KINASE"/>
    <property type="match status" value="1"/>
</dbReference>
<dbReference type="PANTHER" id="PTHR10344:SF4">
    <property type="entry name" value="UMP-CMP KINASE 2, MITOCHONDRIAL"/>
    <property type="match status" value="1"/>
</dbReference>
<dbReference type="Pfam" id="PF02223">
    <property type="entry name" value="Thymidylate_kin"/>
    <property type="match status" value="1"/>
</dbReference>
<dbReference type="SUPFAM" id="SSF52540">
    <property type="entry name" value="P-loop containing nucleoside triphosphate hydrolases"/>
    <property type="match status" value="1"/>
</dbReference>
<sequence>MFISFEGTEGVGKTTLIRKIHQHFEEQGKQVVLTREPGGTPLAEQIRSMLLAVNHNENMSHDTELLLIYAARAQHLQQVILPALESNKIVLSDRFTDASFAYQCSGRGLSQDKLQLLNQNFVSSMPEVTFWLDAPIELGMNRARERGALDRFEQEKLSFFTKVREGYETLWKAEPERIKRLDATQSPDQVFEQALQYLA</sequence>
<accession>B7GYE0</accession>